<organism>
    <name type="scientific">Legionella pneumophila (strain Lens)</name>
    <dbReference type="NCBI Taxonomy" id="297245"/>
    <lineage>
        <taxon>Bacteria</taxon>
        <taxon>Pseudomonadati</taxon>
        <taxon>Pseudomonadota</taxon>
        <taxon>Gammaproteobacteria</taxon>
        <taxon>Legionellales</taxon>
        <taxon>Legionellaceae</taxon>
        <taxon>Legionella</taxon>
    </lineage>
</organism>
<gene>
    <name evidence="1" type="primary">metN</name>
    <name type="ordered locus">lpl1797</name>
</gene>
<proteinExistence type="inferred from homology"/>
<evidence type="ECO:0000255" key="1">
    <source>
        <dbReference type="HAMAP-Rule" id="MF_01719"/>
    </source>
</evidence>
<keyword id="KW-0029">Amino-acid transport</keyword>
<keyword id="KW-0067">ATP-binding</keyword>
<keyword id="KW-0997">Cell inner membrane</keyword>
<keyword id="KW-1003">Cell membrane</keyword>
<keyword id="KW-0472">Membrane</keyword>
<keyword id="KW-0547">Nucleotide-binding</keyword>
<keyword id="KW-1278">Translocase</keyword>
<keyword id="KW-0813">Transport</keyword>
<comment type="function">
    <text evidence="1">Part of the ABC transporter complex MetNIQ involved in methionine import. Responsible for energy coupling to the transport system.</text>
</comment>
<comment type="catalytic activity">
    <reaction evidence="1">
        <text>L-methionine(out) + ATP + H2O = L-methionine(in) + ADP + phosphate + H(+)</text>
        <dbReference type="Rhea" id="RHEA:29779"/>
        <dbReference type="ChEBI" id="CHEBI:15377"/>
        <dbReference type="ChEBI" id="CHEBI:15378"/>
        <dbReference type="ChEBI" id="CHEBI:30616"/>
        <dbReference type="ChEBI" id="CHEBI:43474"/>
        <dbReference type="ChEBI" id="CHEBI:57844"/>
        <dbReference type="ChEBI" id="CHEBI:456216"/>
        <dbReference type="EC" id="7.4.2.11"/>
    </reaction>
</comment>
<comment type="catalytic activity">
    <reaction evidence="1">
        <text>D-methionine(out) + ATP + H2O = D-methionine(in) + ADP + phosphate + H(+)</text>
        <dbReference type="Rhea" id="RHEA:29767"/>
        <dbReference type="ChEBI" id="CHEBI:15377"/>
        <dbReference type="ChEBI" id="CHEBI:15378"/>
        <dbReference type="ChEBI" id="CHEBI:30616"/>
        <dbReference type="ChEBI" id="CHEBI:43474"/>
        <dbReference type="ChEBI" id="CHEBI:57932"/>
        <dbReference type="ChEBI" id="CHEBI:456216"/>
        <dbReference type="EC" id="7.4.2.11"/>
    </reaction>
</comment>
<comment type="subunit">
    <text evidence="1">The complex is composed of two ATP-binding proteins (MetN), two transmembrane proteins (MetI) and a solute-binding protein (MetQ).</text>
</comment>
<comment type="subcellular location">
    <subcellularLocation>
        <location evidence="1">Cell inner membrane</location>
        <topology evidence="1">Peripheral membrane protein</topology>
    </subcellularLocation>
</comment>
<comment type="similarity">
    <text evidence="1">Belongs to the ABC transporter superfamily. Methionine importer (TC 3.A.1.24) family.</text>
</comment>
<name>METN_LEGPL</name>
<sequence length="341" mass="37586">MIELCGLKKSFSGKLALNDINLFIQEGEVFGVIGKSGAGKSTLLRCINILEKPDEGEVVIDGQNLMSLSRKDLALARHKIAMIFQHFNLLNSKTVFDNIALPMRIQGIDEESIKQKIEELLPVVELTDKKDAFPSQLSGGQKQRVAIARALSCSPKVLLCDEATSALDPATTDAILSLLKKINELYGITIVLITHEMDVVKRICQRLSVMVDGKIVETTALSNIFNKPESLARKMLYAQISPELPTCLTRRLADYATEKPLVRLFFQGEEATVPFISQTSRELNMDINILLANIDRFDGVTCGVLVVELTANPLLLEAFINRCEQAGITVEVLGYVLPDGL</sequence>
<protein>
    <recommendedName>
        <fullName evidence="1">Methionine import ATP-binding protein MetN</fullName>
        <ecNumber evidence="1">7.4.2.11</ecNumber>
    </recommendedName>
</protein>
<accession>Q5WVL8</accession>
<feature type="chain" id="PRO_0000270322" description="Methionine import ATP-binding protein MetN">
    <location>
        <begin position="1"/>
        <end position="341"/>
    </location>
</feature>
<feature type="domain" description="ABC transporter" evidence="1">
    <location>
        <begin position="2"/>
        <end position="237"/>
    </location>
</feature>
<feature type="binding site" evidence="1">
    <location>
        <begin position="34"/>
        <end position="41"/>
    </location>
    <ligand>
        <name>ATP</name>
        <dbReference type="ChEBI" id="CHEBI:30616"/>
    </ligand>
</feature>
<reference key="1">
    <citation type="journal article" date="2004" name="Nat. Genet.">
        <title>Evidence in the Legionella pneumophila genome for exploitation of host cell functions and high genome plasticity.</title>
        <authorList>
            <person name="Cazalet C."/>
            <person name="Rusniok C."/>
            <person name="Brueggemann H."/>
            <person name="Zidane N."/>
            <person name="Magnier A."/>
            <person name="Ma L."/>
            <person name="Tichit M."/>
            <person name="Jarraud S."/>
            <person name="Bouchier C."/>
            <person name="Vandenesch F."/>
            <person name="Kunst F."/>
            <person name="Etienne J."/>
            <person name="Glaser P."/>
            <person name="Buchrieser C."/>
        </authorList>
    </citation>
    <scope>NUCLEOTIDE SEQUENCE [LARGE SCALE GENOMIC DNA]</scope>
    <source>
        <strain>Lens</strain>
    </source>
</reference>
<dbReference type="EC" id="7.4.2.11" evidence="1"/>
<dbReference type="EMBL" id="CR628337">
    <property type="protein sequence ID" value="CAH16036.1"/>
    <property type="molecule type" value="Genomic_DNA"/>
</dbReference>
<dbReference type="RefSeq" id="WP_011215803.1">
    <property type="nucleotide sequence ID" value="NC_006369.1"/>
</dbReference>
<dbReference type="SMR" id="Q5WVL8"/>
<dbReference type="KEGG" id="lpf:lpl1797"/>
<dbReference type="LegioList" id="lpl1797"/>
<dbReference type="HOGENOM" id="CLU_000604_1_3_6"/>
<dbReference type="Proteomes" id="UP000002517">
    <property type="component" value="Chromosome"/>
</dbReference>
<dbReference type="GO" id="GO:0005886">
    <property type="term" value="C:plasma membrane"/>
    <property type="evidence" value="ECO:0007669"/>
    <property type="project" value="UniProtKB-SubCell"/>
</dbReference>
<dbReference type="GO" id="GO:0033232">
    <property type="term" value="F:ABC-type D-methionine transporter activity"/>
    <property type="evidence" value="ECO:0007669"/>
    <property type="project" value="UniProtKB-EC"/>
</dbReference>
<dbReference type="GO" id="GO:0005524">
    <property type="term" value="F:ATP binding"/>
    <property type="evidence" value="ECO:0007669"/>
    <property type="project" value="UniProtKB-KW"/>
</dbReference>
<dbReference type="GO" id="GO:0016887">
    <property type="term" value="F:ATP hydrolysis activity"/>
    <property type="evidence" value="ECO:0007669"/>
    <property type="project" value="InterPro"/>
</dbReference>
<dbReference type="CDD" id="cd03258">
    <property type="entry name" value="ABC_MetN_methionine_transporter"/>
    <property type="match status" value="1"/>
</dbReference>
<dbReference type="FunFam" id="3.40.50.300:FF:000056">
    <property type="entry name" value="Cell division ATP-binding protein FtsE"/>
    <property type="match status" value="1"/>
</dbReference>
<dbReference type="Gene3D" id="3.30.70.260">
    <property type="match status" value="1"/>
</dbReference>
<dbReference type="Gene3D" id="3.40.50.300">
    <property type="entry name" value="P-loop containing nucleotide triphosphate hydrolases"/>
    <property type="match status" value="1"/>
</dbReference>
<dbReference type="InterPro" id="IPR003593">
    <property type="entry name" value="AAA+_ATPase"/>
</dbReference>
<dbReference type="InterPro" id="IPR003439">
    <property type="entry name" value="ABC_transporter-like_ATP-bd"/>
</dbReference>
<dbReference type="InterPro" id="IPR017871">
    <property type="entry name" value="ABC_transporter-like_CS"/>
</dbReference>
<dbReference type="InterPro" id="IPR045865">
    <property type="entry name" value="ACT-like_dom_sf"/>
</dbReference>
<dbReference type="InterPro" id="IPR041701">
    <property type="entry name" value="MetN_ABC"/>
</dbReference>
<dbReference type="InterPro" id="IPR050086">
    <property type="entry name" value="MetN_ABC_transporter-like"/>
</dbReference>
<dbReference type="InterPro" id="IPR018449">
    <property type="entry name" value="NIL_domain"/>
</dbReference>
<dbReference type="InterPro" id="IPR027417">
    <property type="entry name" value="P-loop_NTPase"/>
</dbReference>
<dbReference type="PANTHER" id="PTHR43166">
    <property type="entry name" value="AMINO ACID IMPORT ATP-BINDING PROTEIN"/>
    <property type="match status" value="1"/>
</dbReference>
<dbReference type="PANTHER" id="PTHR43166:SF30">
    <property type="entry name" value="METHIONINE IMPORT ATP-BINDING PROTEIN METN"/>
    <property type="match status" value="1"/>
</dbReference>
<dbReference type="Pfam" id="PF00005">
    <property type="entry name" value="ABC_tran"/>
    <property type="match status" value="1"/>
</dbReference>
<dbReference type="Pfam" id="PF09383">
    <property type="entry name" value="NIL"/>
    <property type="match status" value="1"/>
</dbReference>
<dbReference type="SMART" id="SM00382">
    <property type="entry name" value="AAA"/>
    <property type="match status" value="1"/>
</dbReference>
<dbReference type="SMART" id="SM00930">
    <property type="entry name" value="NIL"/>
    <property type="match status" value="1"/>
</dbReference>
<dbReference type="SUPFAM" id="SSF55021">
    <property type="entry name" value="ACT-like"/>
    <property type="match status" value="1"/>
</dbReference>
<dbReference type="SUPFAM" id="SSF52540">
    <property type="entry name" value="P-loop containing nucleoside triphosphate hydrolases"/>
    <property type="match status" value="1"/>
</dbReference>
<dbReference type="PROSITE" id="PS00211">
    <property type="entry name" value="ABC_TRANSPORTER_1"/>
    <property type="match status" value="1"/>
</dbReference>
<dbReference type="PROSITE" id="PS50893">
    <property type="entry name" value="ABC_TRANSPORTER_2"/>
    <property type="match status" value="1"/>
</dbReference>
<dbReference type="PROSITE" id="PS51264">
    <property type="entry name" value="METN"/>
    <property type="match status" value="1"/>
</dbReference>